<dbReference type="EMBL" id="AF190127">
    <property type="protein sequence ID" value="AAF18396.1"/>
    <property type="molecule type" value="Genomic_DNA"/>
</dbReference>
<dbReference type="SMR" id="Q9Q719"/>
<dbReference type="Proteomes" id="UP000150531">
    <property type="component" value="Segment"/>
</dbReference>
<dbReference type="GO" id="GO:0030430">
    <property type="term" value="C:host cell cytoplasm"/>
    <property type="evidence" value="ECO:0007669"/>
    <property type="project" value="UniProtKB-SubCell"/>
</dbReference>
<dbReference type="GO" id="GO:0020002">
    <property type="term" value="C:host cell plasma membrane"/>
    <property type="evidence" value="ECO:0007669"/>
    <property type="project" value="UniProtKB-SubCell"/>
</dbReference>
<dbReference type="GO" id="GO:0016020">
    <property type="term" value="C:membrane"/>
    <property type="evidence" value="ECO:0007669"/>
    <property type="project" value="UniProtKB-UniRule"/>
</dbReference>
<dbReference type="GO" id="GO:0044423">
    <property type="term" value="C:virion component"/>
    <property type="evidence" value="ECO:0007669"/>
    <property type="project" value="UniProtKB-UniRule"/>
</dbReference>
<dbReference type="GO" id="GO:0046872">
    <property type="term" value="F:metal ion binding"/>
    <property type="evidence" value="ECO:0007669"/>
    <property type="project" value="UniProtKB-KW"/>
</dbReference>
<dbReference type="GO" id="GO:0003723">
    <property type="term" value="F:RNA binding"/>
    <property type="evidence" value="ECO:0007669"/>
    <property type="project" value="UniProtKB-UniRule"/>
</dbReference>
<dbReference type="GO" id="GO:0019058">
    <property type="term" value="P:viral life cycle"/>
    <property type="evidence" value="ECO:0007669"/>
    <property type="project" value="InterPro"/>
</dbReference>
<dbReference type="HAMAP" id="MF_04081">
    <property type="entry name" value="HIV_VIF"/>
    <property type="match status" value="1"/>
</dbReference>
<dbReference type="InterPro" id="IPR000475">
    <property type="entry name" value="Vif"/>
</dbReference>
<dbReference type="Pfam" id="PF00559">
    <property type="entry name" value="Vif"/>
    <property type="match status" value="1"/>
</dbReference>
<dbReference type="PRINTS" id="PR00349">
    <property type="entry name" value="VIRIONINFFCT"/>
</dbReference>
<gene>
    <name evidence="2" type="primary">vif</name>
</gene>
<protein>
    <recommendedName>
        <fullName evidence="2">Virion infectivity factor</fullName>
        <shortName evidence="2">Vif</shortName>
    </recommendedName>
    <alternativeName>
        <fullName evidence="2">SOR protein</fullName>
    </alternativeName>
    <component>
        <recommendedName>
            <fullName evidence="2">p17</fullName>
        </recommendedName>
    </component>
    <component>
        <recommendedName>
            <fullName evidence="2">p7</fullName>
        </recommendedName>
    </component>
</protein>
<accession>Q9Q719</accession>
<comment type="function">
    <text evidence="2">Counteracts the innate antiviral activity of host APOBEC3F and APOBEC3G by promoting their ubiquitination and degradation. Acts as a substrate recognition component of an E3 ubiquitin-protein ligase complex: mechanistically, Vif hijacks a host cullin-5-RING E3 ubiquitin-protein ligase complex (ECS complex) and the transcription coactivator CBFB/CBF-beta to form an active E3 ubiquitin-protein ligase complex that targets APOBEC3G and APOBEC3F for polyubiquitination, leading to their degradation by the proteasome. Vif interaction with APOBEC3G also blocks its cytidine deaminase activity in a proteasome-independent manner, suggesting a dual inhibitory mechanism. May interact directly with APOBEC3G mRNA in order to inhibit its translation. Association with CBFB/CBF-beta also inhibits the transcription coactivator activity of CBFB/CBF-beta. Seems to play a role in viral morphology by affecting the stability of the viral nucleoprotein core. Finally, Vif also contributes to the G2 cell cycle arrest observed in HIV infected cells.</text>
</comment>
<comment type="subunit">
    <text evidence="1">Homomultimer; in vitro and presumably in vivo. Interacts with viral RNA and Pr55Gag precursor; these interactions mediate Vif incorporation into the virion. Interacts with the viral reverse transcriptase. Forms cullin-5-RING E3 ubiquitin-protein ligase complex (ECS complex) by interacting with host CUL5, RBX2, elongin BC complex (ELOB and ELOC) and CBFB/CBF-beta. Within the ECS complex, Vif interacts directly with host CUL5, ELOC and APOBEC (APOBEC3F and APOBEC3G) substrates. The ECS complex also contains some single-stranded RNA (ssRNA) that acts as a glue that bridges Vif with APOBEC (APOBEC3F and APOBEC3G) substrates. Interacts with host UBCE7IP1 isoform 3/ZIN and possibly with SAT. Interacts with host tyrosine kinases HCK and FYN; these interactions may decrease level of phosphorylated APOBEC3G incorporation into virions. Interacts with host ABCE1; this interaction may play a role in protecting viral RNA from damage during viral assembly. Interacts with host MDM2; this interaction targets Vif for degradation by the proteasome.</text>
</comment>
<comment type="subcellular location">
    <subcellularLocation>
        <location evidence="2">Host cytoplasm</location>
    </subcellularLocation>
    <subcellularLocation>
        <location evidence="2">Host cell membrane</location>
        <topology evidence="2">Peripheral membrane protein</topology>
        <orientation evidence="2">Cytoplasmic side</orientation>
    </subcellularLocation>
    <subcellularLocation>
        <location evidence="2">Virion</location>
    </subcellularLocation>
    <text evidence="2">In the cytoplasm, seems to colocalize with intermediate filament vimentin. A fraction is associated with the cytoplasmic side of cellular membranes, presumably via the interaction with Pr55Gag precursor. Incorporated in virions at a ratio of approximately 7 to 20 molecules per virion.</text>
</comment>
<comment type="induction">
    <text evidence="2">Expressed late during infection in a Rev-dependent manner.</text>
</comment>
<comment type="domain">
    <text evidence="2">The BC-like-box motif mediates the interaction with elongin BC complex.</text>
</comment>
<comment type="domain">
    <text evidence="2">The HCCH motif (H-x(5)-C-x(18)-C-x(5)-H) mediates the interaction with CUL5.</text>
</comment>
<comment type="PTM">
    <text evidence="2">Processed in virion by the viral protease.</text>
</comment>
<comment type="PTM">
    <text evidence="2">Highly phosphorylated on serine and threonine residues.</text>
</comment>
<comment type="PTM">
    <text evidence="2">Polyubiquitinated and degraded by the proteasome in the presence of APOBEC3G.</text>
</comment>
<comment type="miscellaneous">
    <text evidence="2">Vif-defective viruses show catastrophic failure in reverse transcription due to APOBEC-induced mutations that initiate a DNA base repair pathway and compromise the structural integrity of the ssDNA. In the absence of Vif, the virion is morphologically abnormal.</text>
</comment>
<comment type="miscellaneous">
    <text evidence="2">HIV-1 lineages are divided in three main groups, M (for Major), O (for Outlier), and N (for New, or Non-M, Non-O). The vast majority of strains found worldwide belong to the group M. Group O seems to be endemic to and largely confined to Cameroon and neighboring countries in West Central Africa, where these viruses represent a small minority of HIV-1 strains. The group N is represented by a limited number of isolates from Cameroonian persons. The group M is further subdivided in 9 clades or subtypes (A to D, F to H, J and K).</text>
</comment>
<comment type="miscellaneous">
    <text evidence="2">Required for replication in 'nonpermissive' cells, including primary T-cells, macrophages and certain T-cell lines, but is dispensable for replication in 'permissive' cell lines, such as 293T cells. In nonpermissive cells, Vif-defective viruses can produce virions, but they fail to complete reverse transcription and cannot successfully infect new cells.</text>
</comment>
<comment type="similarity">
    <text evidence="2">Belongs to the primate lentivirus group Vif protein family.</text>
</comment>
<sequence>MENRWQVMIVWQVDRMRIKTWNSLVKHHMYVSKKAKKWVYRHHYESTNPKTSSEVHIPVGDARLVITTYWGLHTGERDWHLGHGVSIEWRQERYSTQIDPDLADQLIHLHYFDCFSDSAIRKAILGHRVSPICDYQAGHRKVGSLQYLALTALISPKRTKPPLPSVRKLVEDRWNKPQKTRGHRGSHTMNGH</sequence>
<keyword id="KW-0014">AIDS</keyword>
<keyword id="KW-1032">Host cell membrane</keyword>
<keyword id="KW-1035">Host cytoplasm</keyword>
<keyword id="KW-1043">Host membrane</keyword>
<keyword id="KW-0945">Host-virus interaction</keyword>
<keyword id="KW-0472">Membrane</keyword>
<keyword id="KW-0479">Metal-binding</keyword>
<keyword id="KW-0597">Phosphoprotein</keyword>
<keyword id="KW-0694">RNA-binding</keyword>
<keyword id="KW-0832">Ubl conjugation</keyword>
<keyword id="KW-0833">Ubl conjugation pathway</keyword>
<keyword id="KW-0946">Virion</keyword>
<keyword id="KW-0862">Zinc</keyword>
<feature type="chain" id="PRO_0000245147" description="Virion infectivity factor" evidence="2">
    <location>
        <begin position="1"/>
        <end position="192"/>
    </location>
</feature>
<feature type="chain" id="PRO_0000245148" description="p17" evidence="2">
    <location>
        <begin position="1"/>
        <end position="150"/>
    </location>
</feature>
<feature type="chain" id="PRO_0000245149" description="p7" evidence="2">
    <location>
        <begin position="151"/>
        <end position="192"/>
    </location>
</feature>
<feature type="region of interest" description="Interaction with host APOBEC3F; F1-box" evidence="2">
    <location>
        <begin position="14"/>
        <end position="17"/>
    </location>
</feature>
<feature type="region of interest" description="Interaction with host APOBEC3G; G-box" evidence="2">
    <location>
        <begin position="40"/>
        <end position="44"/>
    </location>
</feature>
<feature type="region of interest" description="Interaction with host APOBEC3F and APOBEC3G; FG-box" evidence="2">
    <location>
        <begin position="54"/>
        <end position="72"/>
    </location>
</feature>
<feature type="region of interest" description="Interaction with host APOBEC3F; F2-box" evidence="2">
    <location>
        <begin position="74"/>
        <end position="79"/>
    </location>
</feature>
<feature type="region of interest" description="RNA-binding" evidence="2">
    <location>
        <begin position="75"/>
        <end position="114"/>
    </location>
</feature>
<feature type="region of interest" description="SOCS box-like" evidence="2">
    <location>
        <begin position="151"/>
        <end position="180"/>
    </location>
</feature>
<feature type="region of interest" description="Multimerization" evidence="2">
    <location>
        <begin position="151"/>
        <end position="164"/>
    </location>
</feature>
<feature type="region of interest" description="Disordered" evidence="3">
    <location>
        <begin position="170"/>
        <end position="192"/>
    </location>
</feature>
<feature type="region of interest" description="Membrane association" evidence="2">
    <location>
        <begin position="171"/>
        <end position="172"/>
    </location>
</feature>
<feature type="short sequence motif" description="HCCH motif" evidence="2">
    <location>
        <begin position="108"/>
        <end position="139"/>
    </location>
</feature>
<feature type="short sequence motif" description="BC-box-like motif" evidence="2">
    <location>
        <begin position="144"/>
        <end position="153"/>
    </location>
</feature>
<feature type="compositionally biased region" description="Basic residues" evidence="3">
    <location>
        <begin position="176"/>
        <end position="186"/>
    </location>
</feature>
<feature type="binding site" evidence="2">
    <location>
        <position position="108"/>
    </location>
    <ligand>
        <name>Zn(2+)</name>
        <dbReference type="ChEBI" id="CHEBI:29105"/>
    </ligand>
</feature>
<feature type="binding site" evidence="2">
    <location>
        <position position="114"/>
    </location>
    <ligand>
        <name>Zn(2+)</name>
        <dbReference type="ChEBI" id="CHEBI:29105"/>
    </ligand>
</feature>
<feature type="binding site" evidence="2">
    <location>
        <position position="133"/>
    </location>
    <ligand>
        <name>Zn(2+)</name>
        <dbReference type="ChEBI" id="CHEBI:29105"/>
    </ligand>
</feature>
<feature type="binding site" evidence="2">
    <location>
        <position position="139"/>
    </location>
    <ligand>
        <name>Zn(2+)</name>
        <dbReference type="ChEBI" id="CHEBI:29105"/>
    </ligand>
</feature>
<feature type="site" description="Cleavage in virion (by viral protease)" evidence="2">
    <location>
        <begin position="150"/>
        <end position="151"/>
    </location>
</feature>
<feature type="modified residue" description="Phosphothreonine; by host MAP4K1" evidence="2">
    <location>
        <position position="96"/>
    </location>
</feature>
<feature type="modified residue" description="Phosphoserine; by host" evidence="2">
    <location>
        <position position="144"/>
    </location>
</feature>
<feature type="modified residue" description="Phosphoserine; by host MAP4K1" evidence="2">
    <location>
        <position position="165"/>
    </location>
</feature>
<feature type="modified residue" description="Phosphothreonine; by host" evidence="2">
    <location>
        <position position="188"/>
    </location>
</feature>
<evidence type="ECO:0000250" key="1">
    <source>
        <dbReference type="UniProtKB" id="O70897"/>
    </source>
</evidence>
<evidence type="ECO:0000255" key="2">
    <source>
        <dbReference type="HAMAP-Rule" id="MF_04081"/>
    </source>
</evidence>
<evidence type="ECO:0000256" key="3">
    <source>
        <dbReference type="SAM" id="MobiDB-lite"/>
    </source>
</evidence>
<organismHost>
    <name type="scientific">Homo sapiens</name>
    <name type="common">Human</name>
    <dbReference type="NCBI Taxonomy" id="9606"/>
</organismHost>
<name>VIF_HV1V9</name>
<organism>
    <name type="scientific">Human immunodeficiency virus type 1 group M subtype H (isolate VI991)</name>
    <name type="common">HIV-1</name>
    <dbReference type="NCBI Taxonomy" id="388888"/>
    <lineage>
        <taxon>Viruses</taxon>
        <taxon>Riboviria</taxon>
        <taxon>Pararnavirae</taxon>
        <taxon>Artverviricota</taxon>
        <taxon>Revtraviricetes</taxon>
        <taxon>Ortervirales</taxon>
        <taxon>Retroviridae</taxon>
        <taxon>Orthoretrovirinae</taxon>
        <taxon>Lentivirus</taxon>
        <taxon>Human immunodeficiency virus type 1</taxon>
    </lineage>
</organism>
<reference key="1">
    <citation type="journal article" date="2000" name="AIDS">
        <title>HIV-1 subtype H near-full length genome reference strains and analysis of subtype-H-containing inter-subtype recombinants.</title>
        <authorList>
            <person name="Janssens W."/>
            <person name="Laukkanen T."/>
            <person name="Salminen M.O."/>
            <person name="Carr J.K."/>
            <person name="Van der Auwera G."/>
            <person name="Heyndrickx L."/>
            <person name="van der Groen G."/>
            <person name="McCutchan F.E."/>
        </authorList>
    </citation>
    <scope>NUCLEOTIDE SEQUENCE [GENOMIC DNA]</scope>
</reference>
<proteinExistence type="inferred from homology"/>